<dbReference type="EC" id="3.6.4.10"/>
<dbReference type="EMBL" id="AJ617311">
    <property type="protein sequence ID" value="CAE84442.1"/>
    <property type="molecule type" value="Genomic_DNA"/>
</dbReference>
<dbReference type="SMR" id="Q707W3"/>
<dbReference type="PhylomeDB" id="Q707W3"/>
<dbReference type="GO" id="GO:0005737">
    <property type="term" value="C:cytoplasm"/>
    <property type="evidence" value="ECO:0007669"/>
    <property type="project" value="UniProtKB-SubCell"/>
</dbReference>
<dbReference type="GO" id="GO:0005524">
    <property type="term" value="F:ATP binding"/>
    <property type="evidence" value="ECO:0007669"/>
    <property type="project" value="UniProtKB-KW"/>
</dbReference>
<dbReference type="GO" id="GO:0016887">
    <property type="term" value="F:ATP hydrolysis activity"/>
    <property type="evidence" value="ECO:0007669"/>
    <property type="project" value="RHEA"/>
</dbReference>
<dbReference type="GO" id="GO:0140662">
    <property type="term" value="F:ATP-dependent protein folding chaperone"/>
    <property type="evidence" value="ECO:0007669"/>
    <property type="project" value="InterPro"/>
</dbReference>
<dbReference type="GO" id="GO:0006412">
    <property type="term" value="P:translation"/>
    <property type="evidence" value="ECO:0007669"/>
    <property type="project" value="UniProtKB-KW"/>
</dbReference>
<dbReference type="CDD" id="cd24093">
    <property type="entry name" value="ASKHA_NBD_HSP70_Ssb"/>
    <property type="match status" value="1"/>
</dbReference>
<dbReference type="FunFam" id="3.90.640.10:FF:000002">
    <property type="entry name" value="Heat shock 70 kDa"/>
    <property type="match status" value="1"/>
</dbReference>
<dbReference type="FunFam" id="3.30.420.40:FF:000172">
    <property type="entry name" value="Heat shock 70 kDa protein"/>
    <property type="match status" value="1"/>
</dbReference>
<dbReference type="FunFam" id="1.20.1270.10:FF:000014">
    <property type="entry name" value="Heat shock protein 70"/>
    <property type="match status" value="1"/>
</dbReference>
<dbReference type="FunFam" id="3.30.420.40:FF:000026">
    <property type="entry name" value="Heat shock protein 70"/>
    <property type="match status" value="1"/>
</dbReference>
<dbReference type="FunFam" id="2.60.34.10:FF:000004">
    <property type="entry name" value="Heat shock protein SSB1"/>
    <property type="match status" value="1"/>
</dbReference>
<dbReference type="FunFam" id="3.30.30.30:FF:000005">
    <property type="entry name" value="Heat shock protein ssb1"/>
    <property type="match status" value="1"/>
</dbReference>
<dbReference type="Gene3D" id="1.20.1270.10">
    <property type="match status" value="1"/>
</dbReference>
<dbReference type="Gene3D" id="3.30.30.30">
    <property type="match status" value="1"/>
</dbReference>
<dbReference type="Gene3D" id="3.30.420.40">
    <property type="match status" value="2"/>
</dbReference>
<dbReference type="Gene3D" id="3.90.640.10">
    <property type="entry name" value="Actin, Chain A, domain 4"/>
    <property type="match status" value="1"/>
</dbReference>
<dbReference type="Gene3D" id="2.60.34.10">
    <property type="entry name" value="Substrate Binding Domain Of DNAk, Chain A, domain 1"/>
    <property type="match status" value="1"/>
</dbReference>
<dbReference type="InterPro" id="IPR043129">
    <property type="entry name" value="ATPase_NBD"/>
</dbReference>
<dbReference type="InterPro" id="IPR018181">
    <property type="entry name" value="Heat_shock_70_CS"/>
</dbReference>
<dbReference type="InterPro" id="IPR029048">
    <property type="entry name" value="HSP70_C_sf"/>
</dbReference>
<dbReference type="InterPro" id="IPR029047">
    <property type="entry name" value="HSP70_peptide-bd_sf"/>
</dbReference>
<dbReference type="InterPro" id="IPR013126">
    <property type="entry name" value="Hsp_70_fam"/>
</dbReference>
<dbReference type="NCBIfam" id="NF001413">
    <property type="entry name" value="PRK00290.1"/>
    <property type="match status" value="1"/>
</dbReference>
<dbReference type="PANTHER" id="PTHR19375">
    <property type="entry name" value="HEAT SHOCK PROTEIN 70KDA"/>
    <property type="match status" value="1"/>
</dbReference>
<dbReference type="Pfam" id="PF00012">
    <property type="entry name" value="HSP70"/>
    <property type="match status" value="1"/>
</dbReference>
<dbReference type="PRINTS" id="PR00301">
    <property type="entry name" value="HEATSHOCK70"/>
</dbReference>
<dbReference type="SUPFAM" id="SSF53067">
    <property type="entry name" value="Actin-like ATPase domain"/>
    <property type="match status" value="2"/>
</dbReference>
<dbReference type="SUPFAM" id="SSF100934">
    <property type="entry name" value="Heat shock protein 70kD (HSP70), C-terminal subdomain"/>
    <property type="match status" value="1"/>
</dbReference>
<dbReference type="SUPFAM" id="SSF100920">
    <property type="entry name" value="Heat shock protein 70kD (HSP70), peptide-binding domain"/>
    <property type="match status" value="1"/>
</dbReference>
<dbReference type="PROSITE" id="PS00297">
    <property type="entry name" value="HSP70_1"/>
    <property type="match status" value="1"/>
</dbReference>
<dbReference type="PROSITE" id="PS00329">
    <property type="entry name" value="HSP70_2"/>
    <property type="match status" value="1"/>
</dbReference>
<dbReference type="PROSITE" id="PS01036">
    <property type="entry name" value="HSP70_3"/>
    <property type="match status" value="1"/>
</dbReference>
<protein>
    <recommendedName>
        <fullName>Ribosome-associated molecular chaperone SSB1</fullName>
        <ecNumber>3.6.4.10</ecNumber>
    </recommendedName>
    <alternativeName>
        <fullName>Heat shock protein SSB1</fullName>
    </alternativeName>
    <alternativeName>
        <fullName>Hsp70 chaperone Ssb</fullName>
    </alternativeName>
</protein>
<proteinExistence type="inferred from homology"/>
<keyword id="KW-0067">ATP-binding</keyword>
<keyword id="KW-0143">Chaperone</keyword>
<keyword id="KW-0963">Cytoplasm</keyword>
<keyword id="KW-0378">Hydrolase</keyword>
<keyword id="KW-0547">Nucleotide-binding</keyword>
<keyword id="KW-0648">Protein biosynthesis</keyword>
<reference key="1">
    <citation type="journal article" date="2004" name="Proc. Natl. Acad. Sci. U.S.A.">
        <title>Evolution of the MAT locus and its Ho endonuclease in yeast species.</title>
        <authorList>
            <person name="Butler G."/>
            <person name="Kenny C."/>
            <person name="Fagan A."/>
            <person name="Kurischko C."/>
            <person name="Gaillardin C."/>
            <person name="Wolfe K.H."/>
        </authorList>
    </citation>
    <scope>NUCLEOTIDE SEQUENCE [GENOMIC DNA]</scope>
    <source>
        <strain>ATCC 24205 / CBS 2170 / NBRC 10602 / NRRL Y-2379 / UCD 56-2</strain>
    </source>
</reference>
<accession>Q707W3</accession>
<sequence length="613" mass="66428">MADGVFQGAIGIDLGTTYSCVATYESSVEIIANEQGNRVTPSFVAFTPEERLIGDAAKNQAALNPKNTVFDAKRLIGRRFDEESVQNDMKTWPFKVVDVEGAPVIEVEYLGETKQFSPQEISSMVLTKMKEIAEAKIGKKVEKAVITVPAYFNDAQRQATKDAGAISGLNVLRIINEPTAAAIAYGLGAGKSDKERHVLIFDLGGGTFDVSLLHIAGGVYTVKSTSGNTHLGGQDFDTNLLEHFKSDFKKKTGLDISNDARALRRLRTAAERAKRTLSSVTQTTVEVDSLFDGEDFEASLTRARFEDLNAALFKSTLEPVEQVLKDAKISKSQIDEVVLVGGSTRIPKVQKLLSDFFDGKQLEKSINPDEAVAYGAAVQGAILTGQSTSDETKDLLLLDVAPLSLGVGMQGDIFGVVVPRNTTVPTIKRRTFTTVGDNQTTVQFPVYQGERVNCKENTLLGEFDLKNIPPMQAGEPVLEAIFEVDANGILKVTAVEKSTGKSANITISNAVGRLSSEDIEKMVNQAEEFKAADEAFAKRHEAKQRLESYVASIEQTVTDPVLSSKLKRGSKTKIEAALADALAALQIEDGSTEEYRKAEVGLKRVVTKAMSSR</sequence>
<organism>
    <name type="scientific">Nakaseomyces delphensis</name>
    <name type="common">Yeast</name>
    <name type="synonym">Kluyveromyces delphensis</name>
    <dbReference type="NCBI Taxonomy" id="51657"/>
    <lineage>
        <taxon>Eukaryota</taxon>
        <taxon>Fungi</taxon>
        <taxon>Dikarya</taxon>
        <taxon>Ascomycota</taxon>
        <taxon>Saccharomycotina</taxon>
        <taxon>Saccharomycetes</taxon>
        <taxon>Saccharomycetales</taxon>
        <taxon>Saccharomycetaceae</taxon>
        <taxon>Nakaseomyces</taxon>
    </lineage>
</organism>
<name>SSB1_NAKDE</name>
<comment type="function">
    <text evidence="2">Ribosome-bound, Hsp70-type chaperone that assists in the cotranslational folding of newly synthesized proteins in the cytosol. Stimulates folding by interacting with nascent chains, binding to short, largely hydrophobic sequences exposed by unfolded proteins, thereby stabilizing longer, more slowly translated, and aggregation-prone nascent polypeptides and domains that cannot fold stably until fully synthesized. The Hsp70-protein substrate interaction depends on ATP-binding and on allosteric regulation between the NBD and the SBD. The ATP-bound state is characterized by a fast exchange rate of substrate (low affinity state), while in the ADP-bound state exchange is much slower (high affinity state). During the Hsp70 cycle, the chaperone switches between the ATP-bound state (open conformation) and the ADP-bound state (closed conformation) by major conformational rearrangements involving mainly the lid domain. Ssb cooperates with a specific Hsp40/Hsp70 co-chaperone termed the ribosome-associated complex (RAC), which stimulates the ATPase activity of the ribosome-associated pool of Ssbs and switches it to the high affinity substrate binding state. Hsp110 chaperone SSE1 and FES1 act as nucleotide exchange factors that cause substrate release.</text>
</comment>
<comment type="catalytic activity">
    <reaction evidence="2">
        <text>ATP + H2O = ADP + phosphate + H(+)</text>
        <dbReference type="Rhea" id="RHEA:13065"/>
        <dbReference type="ChEBI" id="CHEBI:15377"/>
        <dbReference type="ChEBI" id="CHEBI:15378"/>
        <dbReference type="ChEBI" id="CHEBI:30616"/>
        <dbReference type="ChEBI" id="CHEBI:43474"/>
        <dbReference type="ChEBI" id="CHEBI:456216"/>
        <dbReference type="EC" id="3.6.4.10"/>
    </reaction>
</comment>
<comment type="subunit">
    <text evidence="2">Binds to ribosomes. Binds close to the ribosomal tunnel exit via contacts with both ribosomal proteins and rRNA. Directly interacts with nascent polypeptides. This interaction is dependent on the ribosome-associated complex (RAC). Interacts with SSE1. Interacts with FES1.</text>
</comment>
<comment type="subcellular location">
    <subcellularLocation>
        <location evidence="2">Cytoplasm</location>
    </subcellularLocation>
    <text evidence="2">Associated with translating ribosomes.</text>
</comment>
<comment type="similarity">
    <text evidence="3">Belongs to the heat shock protein 70 family. Ssb-type Hsp70 subfamily.</text>
</comment>
<gene>
    <name type="primary">SSB1</name>
</gene>
<evidence type="ECO:0000250" key="1">
    <source>
        <dbReference type="UniProtKB" id="G0SCU5"/>
    </source>
</evidence>
<evidence type="ECO:0000250" key="2">
    <source>
        <dbReference type="UniProtKB" id="P11484"/>
    </source>
</evidence>
<evidence type="ECO:0000305" key="3"/>
<feature type="chain" id="PRO_0000078369" description="Ribosome-associated molecular chaperone SSB1">
    <location>
        <begin position="1"/>
        <end position="613"/>
    </location>
</feature>
<feature type="region of interest" description="Nucleotide binding domain (NBD)" evidence="1">
    <location>
        <begin position="1"/>
        <end position="391"/>
    </location>
</feature>
<feature type="region of interest" description="Inter-domain linker" evidence="1">
    <location>
        <begin position="392"/>
        <end position="402"/>
    </location>
</feature>
<feature type="region of interest" description="Substrate binding domain (SBD)" evidence="1">
    <location>
        <begin position="403"/>
        <end position="613"/>
    </location>
</feature>
<feature type="region of interest" description="Lid domain (SBDalpha)" evidence="1">
    <location>
        <begin position="516"/>
        <end position="612"/>
    </location>
</feature>
<feature type="short sequence motif" description="Nuclear export signal" evidence="2">
    <location>
        <begin position="574"/>
        <end position="582"/>
    </location>
</feature>
<feature type="binding site" evidence="1">
    <location>
        <begin position="16"/>
        <end position="18"/>
    </location>
    <ligand>
        <name>ATP</name>
        <dbReference type="ChEBI" id="CHEBI:30616"/>
    </ligand>
</feature>
<feature type="binding site" evidence="1">
    <location>
        <position position="73"/>
    </location>
    <ligand>
        <name>ATP</name>
        <dbReference type="ChEBI" id="CHEBI:30616"/>
    </ligand>
</feature>
<feature type="binding site" evidence="1">
    <location>
        <begin position="205"/>
        <end position="207"/>
    </location>
    <ligand>
        <name>ATP</name>
        <dbReference type="ChEBI" id="CHEBI:30616"/>
    </ligand>
</feature>
<feature type="binding site" evidence="1">
    <location>
        <begin position="271"/>
        <end position="278"/>
    </location>
    <ligand>
        <name>ATP</name>
        <dbReference type="ChEBI" id="CHEBI:30616"/>
    </ligand>
</feature>
<feature type="binding site" evidence="1">
    <location>
        <position position="342"/>
    </location>
    <ligand>
        <name>ATP</name>
        <dbReference type="ChEBI" id="CHEBI:30616"/>
    </ligand>
</feature>